<organism>
    <name type="scientific">Chaetosphaeridium globosum</name>
    <name type="common">Charophycean green alga</name>
    <name type="synonym">Herposteiron globosum</name>
    <dbReference type="NCBI Taxonomy" id="96477"/>
    <lineage>
        <taxon>Eukaryota</taxon>
        <taxon>Viridiplantae</taxon>
        <taxon>Streptophyta</taxon>
        <taxon>Coleochaetophyceae</taxon>
        <taxon>Coleochaetales</taxon>
        <taxon>Chaetosphaeridiaceae</taxon>
        <taxon>Chaetosphaeridium</taxon>
    </lineage>
</organism>
<keyword id="KW-0150">Chloroplast</keyword>
<keyword id="KW-0934">Plastid</keyword>
<keyword id="KW-0687">Ribonucleoprotein</keyword>
<keyword id="KW-0689">Ribosomal protein</keyword>
<keyword id="KW-0694">RNA-binding</keyword>
<keyword id="KW-0699">rRNA-binding</keyword>
<name>RR11_CHAGL</name>
<reference key="1">
    <citation type="journal article" date="2002" name="Proc. Natl. Acad. Sci. U.S.A.">
        <title>The chloroplast and mitochondrial genome sequences of the charophyte Chaetosphaeridium globosum: insights into the timing of the events that restructured organelle DNAs within the green algal lineage that led to land plants.</title>
        <authorList>
            <person name="Turmel M."/>
            <person name="Otis C."/>
            <person name="Lemieux C."/>
        </authorList>
    </citation>
    <scope>NUCLEOTIDE SEQUENCE [LARGE SCALE GENOMIC DNA]</scope>
    <source>
        <strain>M1311</strain>
    </source>
</reference>
<proteinExistence type="inferred from homology"/>
<feature type="chain" id="PRO_0000123294" description="Small ribosomal subunit protein uS11c">
    <location>
        <begin position="1"/>
        <end position="130"/>
    </location>
</feature>
<protein>
    <recommendedName>
        <fullName evidence="1">Small ribosomal subunit protein uS11c</fullName>
    </recommendedName>
    <alternativeName>
        <fullName evidence="2">30S ribosomal protein S11, chloroplastic</fullName>
    </alternativeName>
</protein>
<evidence type="ECO:0000255" key="1">
    <source>
        <dbReference type="HAMAP-Rule" id="MF_01310"/>
    </source>
</evidence>
<evidence type="ECO:0000305" key="2"/>
<dbReference type="EMBL" id="AF494278">
    <property type="protein sequence ID" value="AAM96569.1"/>
    <property type="molecule type" value="Genomic_DNA"/>
</dbReference>
<dbReference type="RefSeq" id="NP_683833.1">
    <property type="nucleotide sequence ID" value="NC_004115.1"/>
</dbReference>
<dbReference type="SMR" id="Q8M9V6"/>
<dbReference type="GeneID" id="860725"/>
<dbReference type="GO" id="GO:0009507">
    <property type="term" value="C:chloroplast"/>
    <property type="evidence" value="ECO:0007669"/>
    <property type="project" value="UniProtKB-SubCell"/>
</dbReference>
<dbReference type="GO" id="GO:1990904">
    <property type="term" value="C:ribonucleoprotein complex"/>
    <property type="evidence" value="ECO:0007669"/>
    <property type="project" value="UniProtKB-KW"/>
</dbReference>
<dbReference type="GO" id="GO:0005840">
    <property type="term" value="C:ribosome"/>
    <property type="evidence" value="ECO:0007669"/>
    <property type="project" value="UniProtKB-KW"/>
</dbReference>
<dbReference type="GO" id="GO:0019843">
    <property type="term" value="F:rRNA binding"/>
    <property type="evidence" value="ECO:0007669"/>
    <property type="project" value="UniProtKB-UniRule"/>
</dbReference>
<dbReference type="GO" id="GO:0003735">
    <property type="term" value="F:structural constituent of ribosome"/>
    <property type="evidence" value="ECO:0007669"/>
    <property type="project" value="InterPro"/>
</dbReference>
<dbReference type="GO" id="GO:0006412">
    <property type="term" value="P:translation"/>
    <property type="evidence" value="ECO:0007669"/>
    <property type="project" value="UniProtKB-UniRule"/>
</dbReference>
<dbReference type="Gene3D" id="3.30.420.80">
    <property type="entry name" value="Ribosomal protein S11"/>
    <property type="match status" value="1"/>
</dbReference>
<dbReference type="HAMAP" id="MF_01310">
    <property type="entry name" value="Ribosomal_uS11"/>
    <property type="match status" value="1"/>
</dbReference>
<dbReference type="InterPro" id="IPR001971">
    <property type="entry name" value="Ribosomal_uS11"/>
</dbReference>
<dbReference type="InterPro" id="IPR019981">
    <property type="entry name" value="Ribosomal_uS11_bac-type"/>
</dbReference>
<dbReference type="InterPro" id="IPR018102">
    <property type="entry name" value="Ribosomal_uS11_CS"/>
</dbReference>
<dbReference type="InterPro" id="IPR036967">
    <property type="entry name" value="Ribosomal_uS11_sf"/>
</dbReference>
<dbReference type="NCBIfam" id="NF003698">
    <property type="entry name" value="PRK05309.1"/>
    <property type="match status" value="1"/>
</dbReference>
<dbReference type="NCBIfam" id="TIGR03632">
    <property type="entry name" value="uS11_bact"/>
    <property type="match status" value="1"/>
</dbReference>
<dbReference type="PANTHER" id="PTHR11759">
    <property type="entry name" value="40S RIBOSOMAL PROTEIN S14/30S RIBOSOMAL PROTEIN S11"/>
    <property type="match status" value="1"/>
</dbReference>
<dbReference type="Pfam" id="PF00411">
    <property type="entry name" value="Ribosomal_S11"/>
    <property type="match status" value="1"/>
</dbReference>
<dbReference type="PIRSF" id="PIRSF002131">
    <property type="entry name" value="Ribosomal_S11"/>
    <property type="match status" value="1"/>
</dbReference>
<dbReference type="SUPFAM" id="SSF53137">
    <property type="entry name" value="Translational machinery components"/>
    <property type="match status" value="1"/>
</dbReference>
<dbReference type="PROSITE" id="PS00054">
    <property type="entry name" value="RIBOSOMAL_S11"/>
    <property type="match status" value="1"/>
</dbReference>
<gene>
    <name evidence="1" type="primary">rps11</name>
</gene>
<comment type="subunit">
    <text evidence="1">Part of the 30S ribosomal subunit.</text>
</comment>
<comment type="subcellular location">
    <subcellularLocation>
        <location>Plastid</location>
        <location>Chloroplast</location>
    </subcellularLocation>
</comment>
<comment type="similarity">
    <text evidence="1">Belongs to the universal ribosomal protein uS11 family.</text>
</comment>
<accession>Q8M9V6</accession>
<geneLocation type="chloroplast"/>
<sequence>MPKPSKKINLRKIKKKVPKGVIHIQASFNNTIVTITDVRGQVISWSSAGACGFKGAKKSTPFAAQTAAEKALRPLIDQGMRQAEVMISGPGRGRDTALRIIRKSGITLNFVRDVTPIPHNGCRPPSKRRV</sequence>